<proteinExistence type="inferred from homology"/>
<accession>B1KYV1</accession>
<comment type="function">
    <text evidence="1">Catalyzes the attachment of glutamate to tRNA(Glu) in a two-step reaction: glutamate is first activated by ATP to form Glu-AMP and then transferred to the acceptor end of tRNA(Glu).</text>
</comment>
<comment type="catalytic activity">
    <reaction evidence="1">
        <text>tRNA(Glu) + L-glutamate + ATP = L-glutamyl-tRNA(Glu) + AMP + diphosphate</text>
        <dbReference type="Rhea" id="RHEA:23540"/>
        <dbReference type="Rhea" id="RHEA-COMP:9663"/>
        <dbReference type="Rhea" id="RHEA-COMP:9680"/>
        <dbReference type="ChEBI" id="CHEBI:29985"/>
        <dbReference type="ChEBI" id="CHEBI:30616"/>
        <dbReference type="ChEBI" id="CHEBI:33019"/>
        <dbReference type="ChEBI" id="CHEBI:78442"/>
        <dbReference type="ChEBI" id="CHEBI:78520"/>
        <dbReference type="ChEBI" id="CHEBI:456215"/>
        <dbReference type="EC" id="6.1.1.17"/>
    </reaction>
</comment>
<comment type="cofactor">
    <cofactor evidence="1">
        <name>Zn(2+)</name>
        <dbReference type="ChEBI" id="CHEBI:29105"/>
    </cofactor>
    <text evidence="1">Binds 1 zinc ion per subunit.</text>
</comment>
<comment type="subunit">
    <text evidence="1">Monomer.</text>
</comment>
<comment type="subcellular location">
    <subcellularLocation>
        <location evidence="1">Cytoplasm</location>
    </subcellularLocation>
</comment>
<comment type="similarity">
    <text evidence="1">Belongs to the class-I aminoacyl-tRNA synthetase family. Glutamate--tRNA ligase type 1 subfamily.</text>
</comment>
<dbReference type="EC" id="6.1.1.17" evidence="1"/>
<dbReference type="EMBL" id="CP000962">
    <property type="protein sequence ID" value="ACA53630.1"/>
    <property type="molecule type" value="Genomic_DNA"/>
</dbReference>
<dbReference type="RefSeq" id="WP_012341834.1">
    <property type="nucleotide sequence ID" value="NC_010520.1"/>
</dbReference>
<dbReference type="SMR" id="B1KYV1"/>
<dbReference type="KEGG" id="cbl:CLK_0537"/>
<dbReference type="HOGENOM" id="CLU_015768_6_3_9"/>
<dbReference type="GO" id="GO:0005737">
    <property type="term" value="C:cytoplasm"/>
    <property type="evidence" value="ECO:0007669"/>
    <property type="project" value="UniProtKB-SubCell"/>
</dbReference>
<dbReference type="GO" id="GO:0005524">
    <property type="term" value="F:ATP binding"/>
    <property type="evidence" value="ECO:0007669"/>
    <property type="project" value="UniProtKB-UniRule"/>
</dbReference>
<dbReference type="GO" id="GO:0004818">
    <property type="term" value="F:glutamate-tRNA ligase activity"/>
    <property type="evidence" value="ECO:0007669"/>
    <property type="project" value="UniProtKB-UniRule"/>
</dbReference>
<dbReference type="GO" id="GO:0000049">
    <property type="term" value="F:tRNA binding"/>
    <property type="evidence" value="ECO:0007669"/>
    <property type="project" value="InterPro"/>
</dbReference>
<dbReference type="GO" id="GO:0008270">
    <property type="term" value="F:zinc ion binding"/>
    <property type="evidence" value="ECO:0007669"/>
    <property type="project" value="UniProtKB-UniRule"/>
</dbReference>
<dbReference type="GO" id="GO:0006424">
    <property type="term" value="P:glutamyl-tRNA aminoacylation"/>
    <property type="evidence" value="ECO:0007669"/>
    <property type="project" value="UniProtKB-UniRule"/>
</dbReference>
<dbReference type="CDD" id="cd00808">
    <property type="entry name" value="GluRS_core"/>
    <property type="match status" value="1"/>
</dbReference>
<dbReference type="FunFam" id="3.40.50.620:FF:000045">
    <property type="entry name" value="Glutamate--tRNA ligase, mitochondrial"/>
    <property type="match status" value="1"/>
</dbReference>
<dbReference type="Gene3D" id="1.10.10.350">
    <property type="match status" value="1"/>
</dbReference>
<dbReference type="Gene3D" id="3.40.50.620">
    <property type="entry name" value="HUPs"/>
    <property type="match status" value="1"/>
</dbReference>
<dbReference type="HAMAP" id="MF_00022">
    <property type="entry name" value="Glu_tRNA_synth_type1"/>
    <property type="match status" value="1"/>
</dbReference>
<dbReference type="InterPro" id="IPR045462">
    <property type="entry name" value="aa-tRNA-synth_I_cd-bd"/>
</dbReference>
<dbReference type="InterPro" id="IPR020751">
    <property type="entry name" value="aa-tRNA-synth_I_codon-bd_sub2"/>
</dbReference>
<dbReference type="InterPro" id="IPR001412">
    <property type="entry name" value="aa-tRNA-synth_I_CS"/>
</dbReference>
<dbReference type="InterPro" id="IPR008925">
    <property type="entry name" value="aa_tRNA-synth_I_cd-bd_sf"/>
</dbReference>
<dbReference type="InterPro" id="IPR004527">
    <property type="entry name" value="Glu-tRNA-ligase_bac/mito"/>
</dbReference>
<dbReference type="InterPro" id="IPR000924">
    <property type="entry name" value="Glu/Gln-tRNA-synth"/>
</dbReference>
<dbReference type="InterPro" id="IPR020058">
    <property type="entry name" value="Glu/Gln-tRNA-synth_Ib_cat-dom"/>
</dbReference>
<dbReference type="InterPro" id="IPR049940">
    <property type="entry name" value="GluQ/Sye"/>
</dbReference>
<dbReference type="InterPro" id="IPR033910">
    <property type="entry name" value="GluRS_core"/>
</dbReference>
<dbReference type="InterPro" id="IPR014729">
    <property type="entry name" value="Rossmann-like_a/b/a_fold"/>
</dbReference>
<dbReference type="NCBIfam" id="TIGR00464">
    <property type="entry name" value="gltX_bact"/>
    <property type="match status" value="1"/>
</dbReference>
<dbReference type="PANTHER" id="PTHR43311">
    <property type="entry name" value="GLUTAMATE--TRNA LIGASE"/>
    <property type="match status" value="1"/>
</dbReference>
<dbReference type="PANTHER" id="PTHR43311:SF2">
    <property type="entry name" value="GLUTAMATE--TRNA LIGASE, MITOCHONDRIAL-RELATED"/>
    <property type="match status" value="1"/>
</dbReference>
<dbReference type="Pfam" id="PF19269">
    <property type="entry name" value="Anticodon_2"/>
    <property type="match status" value="1"/>
</dbReference>
<dbReference type="Pfam" id="PF00749">
    <property type="entry name" value="tRNA-synt_1c"/>
    <property type="match status" value="1"/>
</dbReference>
<dbReference type="PRINTS" id="PR00987">
    <property type="entry name" value="TRNASYNTHGLU"/>
</dbReference>
<dbReference type="SUPFAM" id="SSF48163">
    <property type="entry name" value="An anticodon-binding domain of class I aminoacyl-tRNA synthetases"/>
    <property type="match status" value="1"/>
</dbReference>
<dbReference type="SUPFAM" id="SSF52374">
    <property type="entry name" value="Nucleotidylyl transferase"/>
    <property type="match status" value="1"/>
</dbReference>
<dbReference type="PROSITE" id="PS00178">
    <property type="entry name" value="AA_TRNA_LIGASE_I"/>
    <property type="match status" value="1"/>
</dbReference>
<reference key="1">
    <citation type="journal article" date="2007" name="PLoS ONE">
        <title>Analysis of the neurotoxin complex genes in Clostridium botulinum A1-A4 and B1 strains: BoNT/A3, /Ba4 and /B1 clusters are located within plasmids.</title>
        <authorList>
            <person name="Smith T.J."/>
            <person name="Hill K.K."/>
            <person name="Foley B.T."/>
            <person name="Detter J.C."/>
            <person name="Munk A.C."/>
            <person name="Bruce D.C."/>
            <person name="Doggett N.A."/>
            <person name="Smith L.A."/>
            <person name="Marks J.D."/>
            <person name="Xie G."/>
            <person name="Brettin T.S."/>
        </authorList>
    </citation>
    <scope>NUCLEOTIDE SEQUENCE [LARGE SCALE GENOMIC DNA]</scope>
    <source>
        <strain>Loch Maree / Type A3</strain>
    </source>
</reference>
<organism>
    <name type="scientific">Clostridium botulinum (strain Loch Maree / Type A3)</name>
    <dbReference type="NCBI Taxonomy" id="498214"/>
    <lineage>
        <taxon>Bacteria</taxon>
        <taxon>Bacillati</taxon>
        <taxon>Bacillota</taxon>
        <taxon>Clostridia</taxon>
        <taxon>Eubacteriales</taxon>
        <taxon>Clostridiaceae</taxon>
        <taxon>Clostridium</taxon>
    </lineage>
</organism>
<keyword id="KW-0030">Aminoacyl-tRNA synthetase</keyword>
<keyword id="KW-0067">ATP-binding</keyword>
<keyword id="KW-0963">Cytoplasm</keyword>
<keyword id="KW-0436">Ligase</keyword>
<keyword id="KW-0479">Metal-binding</keyword>
<keyword id="KW-0547">Nucleotide-binding</keyword>
<keyword id="KW-0648">Protein biosynthesis</keyword>
<keyword id="KW-0862">Zinc</keyword>
<evidence type="ECO:0000255" key="1">
    <source>
        <dbReference type="HAMAP-Rule" id="MF_00022"/>
    </source>
</evidence>
<sequence>MTNKVRTRFAPSPTGYMHVGNLRTALYAYLIAKHDNGDFILRIEDTDQERLVEGALDVIYNTLKITGLSHDEGPDIGGPVGPYVQSERRNIYIEYAEKLIEKGEAYYCFCSKERLDMLRANSEALKRPFRYDKHCIDLSKEEIDKKIAEGVPYVIRQKNPTTGSTSFHDEIYGDISVDNSELDDMILIKSDGLPTYNFANVVDDHLMGITHVVRGSEYLSSSPKYNRLYEAFGWDVPIYVHCPPIMKDEHHKLSKRNGDASFEDLMAKGYLKEAILNYIALLGWNPGGEKEVFSMKELIEAFNYRNINKAPAVFDTKKLKWMNGEYIRALSLDKFHEMALPHYKEALTRDLDTKKISELLHTRVEVLNEIPEQLDFFNNLLEYSPEMYIHKKMKTTYENSLKSLEEVLPRLEALENWTFENIKEVCMNLVKELEVKNGVVLWPIRTAVSGKQFTPGGAFEIADILGKEETLERIKIGINKLKALQ</sequence>
<gene>
    <name evidence="1" type="primary">gltX</name>
    <name type="ordered locus">CLK_0537</name>
</gene>
<protein>
    <recommendedName>
        <fullName evidence="1">Glutamate--tRNA ligase</fullName>
        <ecNumber evidence="1">6.1.1.17</ecNumber>
    </recommendedName>
    <alternativeName>
        <fullName evidence="1">Glutamyl-tRNA synthetase</fullName>
        <shortName evidence="1">GluRS</shortName>
    </alternativeName>
</protein>
<name>SYE_CLOBM</name>
<feature type="chain" id="PRO_1000090067" description="Glutamate--tRNA ligase">
    <location>
        <begin position="1"/>
        <end position="485"/>
    </location>
</feature>
<feature type="short sequence motif" description="'HIGH' region" evidence="1">
    <location>
        <begin position="11"/>
        <end position="21"/>
    </location>
</feature>
<feature type="short sequence motif" description="'KMSKS' region" evidence="1">
    <location>
        <begin position="252"/>
        <end position="256"/>
    </location>
</feature>
<feature type="binding site" evidence="1">
    <location>
        <position position="108"/>
    </location>
    <ligand>
        <name>Zn(2+)</name>
        <dbReference type="ChEBI" id="CHEBI:29105"/>
    </ligand>
</feature>
<feature type="binding site" evidence="1">
    <location>
        <position position="110"/>
    </location>
    <ligand>
        <name>Zn(2+)</name>
        <dbReference type="ChEBI" id="CHEBI:29105"/>
    </ligand>
</feature>
<feature type="binding site" evidence="1">
    <location>
        <position position="135"/>
    </location>
    <ligand>
        <name>Zn(2+)</name>
        <dbReference type="ChEBI" id="CHEBI:29105"/>
    </ligand>
</feature>
<feature type="binding site" evidence="1">
    <location>
        <position position="137"/>
    </location>
    <ligand>
        <name>Zn(2+)</name>
        <dbReference type="ChEBI" id="CHEBI:29105"/>
    </ligand>
</feature>
<feature type="binding site" evidence="1">
    <location>
        <position position="255"/>
    </location>
    <ligand>
        <name>ATP</name>
        <dbReference type="ChEBI" id="CHEBI:30616"/>
    </ligand>
</feature>